<accession>O28930</accession>
<evidence type="ECO:0000255" key="1">
    <source>
        <dbReference type="HAMAP-Rule" id="MF_00448"/>
    </source>
</evidence>
<evidence type="ECO:0000305" key="2"/>
<name>RL10E_ARCFU</name>
<sequence>MARKPARMWRRLERPYTRTEYIDGAPGTRVRMFDMGNKSADFPVMLTLVAKEAVQIRENALEAARVVANKYVSRRAGASNYKLKLRIFPHHILREHKMAVGAGADRISQGMRAAFGKPVGRAARVKPGTKIMSVWVKPEHFEIAKEALRRAAMKMPTPTKIVVEKGHELLKGKI</sequence>
<comment type="similarity">
    <text evidence="1">Belongs to the universal ribosomal protein uL16 family.</text>
</comment>
<organism>
    <name type="scientific">Archaeoglobus fulgidus (strain ATCC 49558 / DSM 4304 / JCM 9628 / NBRC 100126 / VC-16)</name>
    <dbReference type="NCBI Taxonomy" id="224325"/>
    <lineage>
        <taxon>Archaea</taxon>
        <taxon>Methanobacteriati</taxon>
        <taxon>Methanobacteriota</taxon>
        <taxon>Archaeoglobi</taxon>
        <taxon>Archaeoglobales</taxon>
        <taxon>Archaeoglobaceae</taxon>
        <taxon>Archaeoglobus</taxon>
    </lineage>
</organism>
<dbReference type="EMBL" id="AE000782">
    <property type="protein sequence ID" value="AAB89905.1"/>
    <property type="molecule type" value="Genomic_DNA"/>
</dbReference>
<dbReference type="PIR" id="B69417">
    <property type="entry name" value="B69417"/>
</dbReference>
<dbReference type="SMR" id="O28930"/>
<dbReference type="STRING" id="224325.AF_1339"/>
<dbReference type="PaxDb" id="224325-AF_1339"/>
<dbReference type="EnsemblBacteria" id="AAB89905">
    <property type="protein sequence ID" value="AAB89905"/>
    <property type="gene ID" value="AF_1339"/>
</dbReference>
<dbReference type="KEGG" id="afu:AF_1339"/>
<dbReference type="eggNOG" id="arCOG04113">
    <property type="taxonomic scope" value="Archaea"/>
</dbReference>
<dbReference type="HOGENOM" id="CLU_084051_0_2_2"/>
<dbReference type="OrthoDB" id="30538at2157"/>
<dbReference type="PhylomeDB" id="O28930"/>
<dbReference type="Proteomes" id="UP000002199">
    <property type="component" value="Chromosome"/>
</dbReference>
<dbReference type="GO" id="GO:1990904">
    <property type="term" value="C:ribonucleoprotein complex"/>
    <property type="evidence" value="ECO:0007669"/>
    <property type="project" value="UniProtKB-KW"/>
</dbReference>
<dbReference type="GO" id="GO:0005840">
    <property type="term" value="C:ribosome"/>
    <property type="evidence" value="ECO:0007669"/>
    <property type="project" value="UniProtKB-KW"/>
</dbReference>
<dbReference type="GO" id="GO:0003735">
    <property type="term" value="F:structural constituent of ribosome"/>
    <property type="evidence" value="ECO:0007669"/>
    <property type="project" value="InterPro"/>
</dbReference>
<dbReference type="GO" id="GO:0006412">
    <property type="term" value="P:translation"/>
    <property type="evidence" value="ECO:0007669"/>
    <property type="project" value="UniProtKB-UniRule"/>
</dbReference>
<dbReference type="CDD" id="cd01433">
    <property type="entry name" value="Ribosomal_L16_L10e"/>
    <property type="match status" value="1"/>
</dbReference>
<dbReference type="Gene3D" id="3.90.1170.10">
    <property type="entry name" value="Ribosomal protein L10e/L16"/>
    <property type="match status" value="1"/>
</dbReference>
<dbReference type="HAMAP" id="MF_00448">
    <property type="entry name" value="Ribosomal_uL16_arch"/>
    <property type="match status" value="1"/>
</dbReference>
<dbReference type="InterPro" id="IPR047873">
    <property type="entry name" value="Ribosomal_uL16"/>
</dbReference>
<dbReference type="InterPro" id="IPR022981">
    <property type="entry name" value="Ribosomal_uL16_arc"/>
</dbReference>
<dbReference type="InterPro" id="IPR018255">
    <property type="entry name" value="Ribosomal_uL16_CS_euk_arc"/>
</dbReference>
<dbReference type="InterPro" id="IPR016180">
    <property type="entry name" value="Ribosomal_uL16_dom"/>
</dbReference>
<dbReference type="InterPro" id="IPR001197">
    <property type="entry name" value="Ribosomal_uL16_euk_arch"/>
</dbReference>
<dbReference type="InterPro" id="IPR036920">
    <property type="entry name" value="Ribosomal_uL16_sf"/>
</dbReference>
<dbReference type="NCBIfam" id="NF003239">
    <property type="entry name" value="PRK04199.1-4"/>
    <property type="match status" value="1"/>
</dbReference>
<dbReference type="NCBIfam" id="TIGR00279">
    <property type="entry name" value="uL16_euk_arch"/>
    <property type="match status" value="1"/>
</dbReference>
<dbReference type="PANTHER" id="PTHR11726">
    <property type="entry name" value="60S RIBOSOMAL PROTEIN L10"/>
    <property type="match status" value="1"/>
</dbReference>
<dbReference type="Pfam" id="PF00252">
    <property type="entry name" value="Ribosomal_L16"/>
    <property type="match status" value="1"/>
</dbReference>
<dbReference type="PIRSF" id="PIRSF005590">
    <property type="entry name" value="Ribosomal_L10"/>
    <property type="match status" value="1"/>
</dbReference>
<dbReference type="SUPFAM" id="SSF54686">
    <property type="entry name" value="Ribosomal protein L16p/L10e"/>
    <property type="match status" value="1"/>
</dbReference>
<dbReference type="PROSITE" id="PS01257">
    <property type="entry name" value="RIBOSOMAL_L10E"/>
    <property type="match status" value="1"/>
</dbReference>
<gene>
    <name evidence="1" type="primary">rpl10e</name>
    <name type="ordered locus">AF_1339</name>
</gene>
<feature type="chain" id="PRO_0000147131" description="Large ribosomal subunit protein uL16">
    <location>
        <begin position="1"/>
        <end position="174"/>
    </location>
</feature>
<protein>
    <recommendedName>
        <fullName evidence="1">Large ribosomal subunit protein uL16</fullName>
    </recommendedName>
    <alternativeName>
        <fullName evidence="2">50S ribosomal protein L10e</fullName>
    </alternativeName>
</protein>
<keyword id="KW-1185">Reference proteome</keyword>
<keyword id="KW-0687">Ribonucleoprotein</keyword>
<keyword id="KW-0689">Ribosomal protein</keyword>
<reference key="1">
    <citation type="journal article" date="1997" name="Nature">
        <title>The complete genome sequence of the hyperthermophilic, sulphate-reducing archaeon Archaeoglobus fulgidus.</title>
        <authorList>
            <person name="Klenk H.-P."/>
            <person name="Clayton R.A."/>
            <person name="Tomb J.-F."/>
            <person name="White O."/>
            <person name="Nelson K.E."/>
            <person name="Ketchum K.A."/>
            <person name="Dodson R.J."/>
            <person name="Gwinn M.L."/>
            <person name="Hickey E.K."/>
            <person name="Peterson J.D."/>
            <person name="Richardson D.L."/>
            <person name="Kerlavage A.R."/>
            <person name="Graham D.E."/>
            <person name="Kyrpides N.C."/>
            <person name="Fleischmann R.D."/>
            <person name="Quackenbush J."/>
            <person name="Lee N.H."/>
            <person name="Sutton G.G."/>
            <person name="Gill S.R."/>
            <person name="Kirkness E.F."/>
            <person name="Dougherty B.A."/>
            <person name="McKenney K."/>
            <person name="Adams M.D."/>
            <person name="Loftus B.J."/>
            <person name="Peterson S.N."/>
            <person name="Reich C.I."/>
            <person name="McNeil L.K."/>
            <person name="Badger J.H."/>
            <person name="Glodek A."/>
            <person name="Zhou L."/>
            <person name="Overbeek R."/>
            <person name="Gocayne J.D."/>
            <person name="Weidman J.F."/>
            <person name="McDonald L.A."/>
            <person name="Utterback T.R."/>
            <person name="Cotton M.D."/>
            <person name="Spriggs T."/>
            <person name="Artiach P."/>
            <person name="Kaine B.P."/>
            <person name="Sykes S.M."/>
            <person name="Sadow P.W."/>
            <person name="D'Andrea K.P."/>
            <person name="Bowman C."/>
            <person name="Fujii C."/>
            <person name="Garland S.A."/>
            <person name="Mason T.M."/>
            <person name="Olsen G.J."/>
            <person name="Fraser C.M."/>
            <person name="Smith H.O."/>
            <person name="Woese C.R."/>
            <person name="Venter J.C."/>
        </authorList>
    </citation>
    <scope>NUCLEOTIDE SEQUENCE [LARGE SCALE GENOMIC DNA]</scope>
    <source>
        <strain>ATCC 49558 / DSM 4304 / JCM 9628 / NBRC 100126 / VC-16</strain>
    </source>
</reference>
<proteinExistence type="inferred from homology"/>